<proteinExistence type="inferred from homology"/>
<comment type="function">
    <text evidence="1">Plays a role in virus cell tropism, and may be required for efficient virus replication in macrophages.</text>
</comment>
<comment type="induction">
    <text evidence="2">Expressed in the early phase of the viral replicative cycle.</text>
</comment>
<comment type="similarity">
    <text evidence="2">Belongs to the asfivirus MGF 505 family.</text>
</comment>
<evidence type="ECO:0000250" key="1">
    <source>
        <dbReference type="UniProtKB" id="Q89777"/>
    </source>
</evidence>
<evidence type="ECO:0000305" key="2"/>
<gene>
    <name type="ordered locus">Mal-038</name>
</gene>
<organism>
    <name type="scientific">African swine fever virus (isolate Tick/Malawi/Lil 20-1/1983)</name>
    <name type="common">ASFV</name>
    <dbReference type="NCBI Taxonomy" id="10500"/>
    <lineage>
        <taxon>Viruses</taxon>
        <taxon>Varidnaviria</taxon>
        <taxon>Bamfordvirae</taxon>
        <taxon>Nucleocytoviricota</taxon>
        <taxon>Pokkesviricetes</taxon>
        <taxon>Asfuvirales</taxon>
        <taxon>Asfarviridae</taxon>
        <taxon>Asfivirus</taxon>
        <taxon>African swine fever virus</taxon>
    </lineage>
</organism>
<accession>P0C9T7</accession>
<dbReference type="EMBL" id="AY261361">
    <property type="status" value="NOT_ANNOTATED_CDS"/>
    <property type="molecule type" value="Genomic_DNA"/>
</dbReference>
<dbReference type="SMR" id="P0C9T7"/>
<dbReference type="Proteomes" id="UP000000860">
    <property type="component" value="Segment"/>
</dbReference>
<dbReference type="InterPro" id="IPR004858">
    <property type="entry name" value="MGF_505"/>
</dbReference>
<dbReference type="Pfam" id="PF03158">
    <property type="entry name" value="DUF249"/>
    <property type="match status" value="1"/>
</dbReference>
<feature type="chain" id="PRO_0000373334" description="Protein MGF 505-5R">
    <location>
        <begin position="1"/>
        <end position="502"/>
    </location>
</feature>
<reference key="1">
    <citation type="submission" date="2003-03" db="EMBL/GenBank/DDBJ databases">
        <title>African swine fever virus genomes.</title>
        <authorList>
            <person name="Kutish G.F."/>
            <person name="Rock D.L."/>
        </authorList>
    </citation>
    <scope>NUCLEOTIDE SEQUENCE [LARGE SCALE GENOMIC DNA]</scope>
</reference>
<name>5055R_ASFM2</name>
<sequence length="502" mass="58801">MFTLQEICRKNIYFLPDWLNEHVAQRLGLYWEKHGSLQRIGDDYVLIQQDLIISINEALRMAGEEGNDEVVQLLLQWEGNIFYAIIGALEGDHDSLAYKLYSQIRDCHTILPLIQDPKIFEKCHDLDESCNISCLVLNAVKHDMLCILQEYKMLLSGGDIQEVFEIACRSLKYDIVTWMGQNIAIYNPGVIFDIAFDKMNVSLLSIGYTLLFNHHINHINHENIDVNSLLTQHLEWAAGMGLLHFMLETLKYGGDVTIIVLSAAVKYDHRKVLDYFLRRKNLYREDIEELLLLAISADCSKKTLNLLLSYLNYSIDNIRKKILQYVKEYETTLIIKILWKKKKINLIEPILADFIGYHSYTYMKGFMRDFSIHPERIIKMAARESREDLIIKFSKNVCKEPKDRLHYLKNLVYTMKHKGGKQLLIYTIHNLYKASCLESKEMFKLARFYARHDARIQFKSICHDLSKQNINIKNLLLECLGIAIKKNYFQLIETIEMTMNYE</sequence>
<organismHost>
    <name type="scientific">Ornithodoros</name>
    <name type="common">relapsing fever ticks</name>
    <dbReference type="NCBI Taxonomy" id="6937"/>
</organismHost>
<organismHost>
    <name type="scientific">Phacochoerus aethiopicus</name>
    <name type="common">Warthog</name>
    <dbReference type="NCBI Taxonomy" id="85517"/>
</organismHost>
<organismHost>
    <name type="scientific">Phacochoerus africanus</name>
    <name type="common">Warthog</name>
    <dbReference type="NCBI Taxonomy" id="41426"/>
</organismHost>
<organismHost>
    <name type="scientific">Potamochoerus larvatus</name>
    <name type="common">Bushpig</name>
    <dbReference type="NCBI Taxonomy" id="273792"/>
</organismHost>
<organismHost>
    <name type="scientific">Sus scrofa</name>
    <name type="common">Pig</name>
    <dbReference type="NCBI Taxonomy" id="9823"/>
</organismHost>
<protein>
    <recommendedName>
        <fullName>Protein MGF 505-5R</fullName>
    </recommendedName>
</protein>